<organism>
    <name type="scientific">Methanococcoides burtonii (strain DSM 6242 / NBRC 107633 / OCM 468 / ACE-M)</name>
    <dbReference type="NCBI Taxonomy" id="259564"/>
    <lineage>
        <taxon>Archaea</taxon>
        <taxon>Methanobacteriati</taxon>
        <taxon>Methanobacteriota</taxon>
        <taxon>Stenosarchaea group</taxon>
        <taxon>Methanomicrobia</taxon>
        <taxon>Methanosarcinales</taxon>
        <taxon>Methanosarcinaceae</taxon>
        <taxon>Methanococcoides</taxon>
    </lineage>
</organism>
<name>PGP_METBU</name>
<protein>
    <recommendedName>
        <fullName evidence="1">Phosphoglycolate phosphatase</fullName>
        <shortName evidence="1">PGP</shortName>
        <shortName evidence="1">PGPase</shortName>
        <ecNumber evidence="1">3.1.3.18</ecNumber>
    </recommendedName>
</protein>
<comment type="function">
    <text evidence="1">Catalyzes the dephosphorylation of 2-phosphoglycolate.</text>
</comment>
<comment type="catalytic activity">
    <reaction evidence="1">
        <text>2-phosphoglycolate + H2O = glycolate + phosphate</text>
        <dbReference type="Rhea" id="RHEA:14369"/>
        <dbReference type="ChEBI" id="CHEBI:15377"/>
        <dbReference type="ChEBI" id="CHEBI:29805"/>
        <dbReference type="ChEBI" id="CHEBI:43474"/>
        <dbReference type="ChEBI" id="CHEBI:58033"/>
        <dbReference type="EC" id="3.1.3.18"/>
    </reaction>
</comment>
<comment type="cofactor">
    <cofactor evidence="1">
        <name>Mg(2+)</name>
        <dbReference type="ChEBI" id="CHEBI:18420"/>
    </cofactor>
</comment>
<comment type="similarity">
    <text evidence="1">Belongs to the archaeal SPP-like hydrolase family.</text>
</comment>
<reference key="1">
    <citation type="journal article" date="2009" name="ISME J.">
        <title>The genome sequence of the psychrophilic archaeon, Methanococcoides burtonii: the role of genome evolution in cold adaptation.</title>
        <authorList>
            <person name="Allen M.A."/>
            <person name="Lauro F.M."/>
            <person name="Williams T.J."/>
            <person name="Burg D."/>
            <person name="Siddiqui K.S."/>
            <person name="De Francisci D."/>
            <person name="Chong K.W."/>
            <person name="Pilak O."/>
            <person name="Chew H.H."/>
            <person name="De Maere M.Z."/>
            <person name="Ting L."/>
            <person name="Katrib M."/>
            <person name="Ng C."/>
            <person name="Sowers K.R."/>
            <person name="Galperin M.Y."/>
            <person name="Anderson I.J."/>
            <person name="Ivanova N."/>
            <person name="Dalin E."/>
            <person name="Martinez M."/>
            <person name="Lapidus A."/>
            <person name="Hauser L."/>
            <person name="Land M."/>
            <person name="Thomas T."/>
            <person name="Cavicchioli R."/>
        </authorList>
    </citation>
    <scope>NUCLEOTIDE SEQUENCE [LARGE SCALE GENOMIC DNA]</scope>
    <source>
        <strain>DSM 6242 / NBRC 107633 / OCM 468 / ACE-M</strain>
    </source>
</reference>
<accession>Q12UG6</accession>
<evidence type="ECO:0000255" key="1">
    <source>
        <dbReference type="HAMAP-Rule" id="MF_01419"/>
    </source>
</evidence>
<dbReference type="EC" id="3.1.3.18" evidence="1"/>
<dbReference type="EMBL" id="CP000300">
    <property type="protein sequence ID" value="ABE52910.1"/>
    <property type="molecule type" value="Genomic_DNA"/>
</dbReference>
<dbReference type="RefSeq" id="WP_011500050.1">
    <property type="nucleotide sequence ID" value="NC_007955.1"/>
</dbReference>
<dbReference type="SMR" id="Q12UG6"/>
<dbReference type="STRING" id="259564.Mbur_2034"/>
<dbReference type="GeneID" id="3997416"/>
<dbReference type="KEGG" id="mbu:Mbur_2034"/>
<dbReference type="HOGENOM" id="CLU_044146_2_0_2"/>
<dbReference type="OrthoDB" id="120822at2157"/>
<dbReference type="Proteomes" id="UP000001979">
    <property type="component" value="Chromosome"/>
</dbReference>
<dbReference type="GO" id="GO:0005829">
    <property type="term" value="C:cytosol"/>
    <property type="evidence" value="ECO:0007669"/>
    <property type="project" value="TreeGrafter"/>
</dbReference>
<dbReference type="GO" id="GO:0000287">
    <property type="term" value="F:magnesium ion binding"/>
    <property type="evidence" value="ECO:0007669"/>
    <property type="project" value="InterPro"/>
</dbReference>
<dbReference type="GO" id="GO:0008967">
    <property type="term" value="F:phosphoglycolate phosphatase activity"/>
    <property type="evidence" value="ECO:0007669"/>
    <property type="project" value="UniProtKB-UniRule"/>
</dbReference>
<dbReference type="CDD" id="cd07514">
    <property type="entry name" value="HAD_Pase"/>
    <property type="match status" value="1"/>
</dbReference>
<dbReference type="Gene3D" id="3.90.1070.10">
    <property type="match status" value="1"/>
</dbReference>
<dbReference type="Gene3D" id="3.40.50.1000">
    <property type="entry name" value="HAD superfamily/HAD-like"/>
    <property type="match status" value="1"/>
</dbReference>
<dbReference type="HAMAP" id="MF_01419">
    <property type="entry name" value="GPH_hydrolase_arch"/>
    <property type="match status" value="1"/>
</dbReference>
<dbReference type="InterPro" id="IPR036412">
    <property type="entry name" value="HAD-like_sf"/>
</dbReference>
<dbReference type="InterPro" id="IPR023214">
    <property type="entry name" value="HAD_sf"/>
</dbReference>
<dbReference type="InterPro" id="IPR006382">
    <property type="entry name" value="PGPase"/>
</dbReference>
<dbReference type="NCBIfam" id="TIGR01487">
    <property type="entry name" value="Pglycolate_arch"/>
    <property type="match status" value="1"/>
</dbReference>
<dbReference type="NCBIfam" id="NF002245">
    <property type="entry name" value="PRK01158.1"/>
    <property type="match status" value="1"/>
</dbReference>
<dbReference type="NCBIfam" id="TIGR01482">
    <property type="entry name" value="SPP-subfamily"/>
    <property type="match status" value="1"/>
</dbReference>
<dbReference type="PANTHER" id="PTHR10000:SF8">
    <property type="entry name" value="HAD SUPERFAMILY HYDROLASE-LIKE, TYPE 3"/>
    <property type="match status" value="1"/>
</dbReference>
<dbReference type="PANTHER" id="PTHR10000">
    <property type="entry name" value="PHOSPHOSERINE PHOSPHATASE"/>
    <property type="match status" value="1"/>
</dbReference>
<dbReference type="Pfam" id="PF08282">
    <property type="entry name" value="Hydrolase_3"/>
    <property type="match status" value="2"/>
</dbReference>
<dbReference type="SUPFAM" id="SSF56784">
    <property type="entry name" value="HAD-like"/>
    <property type="match status" value="1"/>
</dbReference>
<sequence length="226" mass="24084">MVLKAIVIDIDGTITNPDRSLDLDVAKRFRELNVPVILSTGNPLCYVHAAAKLIGISGIVIAENGGVISTGFDSPSIIADGKEECEKAYELLSQYHDLVKLDDAYRKTEVVLNRDVAVEDLRSTLSENGIDIEIIDTGYAIHIKSTAMNKGTGLLKVAELMGLEPTDYLAIGDSCNDAEMMQVAGFGIAVANADSDAIKAARHITKASFGKGALEAIEYALSNGLL</sequence>
<gene>
    <name type="ordered locus">Mbur_2034</name>
</gene>
<keyword id="KW-0119">Carbohydrate metabolism</keyword>
<keyword id="KW-0378">Hydrolase</keyword>
<keyword id="KW-0460">Magnesium</keyword>
<keyword id="KW-0479">Metal-binding</keyword>
<proteinExistence type="inferred from homology"/>
<feature type="chain" id="PRO_1000024289" description="Phosphoglycolate phosphatase">
    <location>
        <begin position="1"/>
        <end position="226"/>
    </location>
</feature>
<feature type="active site" description="Nucleophile" evidence="1">
    <location>
        <position position="9"/>
    </location>
</feature>
<feature type="binding site" evidence="1">
    <location>
        <position position="9"/>
    </location>
    <ligand>
        <name>Mg(2+)</name>
        <dbReference type="ChEBI" id="CHEBI:18420"/>
    </ligand>
</feature>
<feature type="binding site" evidence="1">
    <location>
        <position position="11"/>
    </location>
    <ligand>
        <name>Mg(2+)</name>
        <dbReference type="ChEBI" id="CHEBI:18420"/>
    </ligand>
</feature>
<feature type="binding site" evidence="1">
    <location>
        <position position="150"/>
    </location>
    <ligand>
        <name>substrate</name>
    </ligand>
</feature>
<feature type="binding site" evidence="1">
    <location>
        <position position="173"/>
    </location>
    <ligand>
        <name>Mg(2+)</name>
        <dbReference type="ChEBI" id="CHEBI:18420"/>
    </ligand>
</feature>
<feature type="binding site" evidence="1">
    <location>
        <position position="177"/>
    </location>
    <ligand>
        <name>Mg(2+)</name>
        <dbReference type="ChEBI" id="CHEBI:18420"/>
    </ligand>
</feature>